<feature type="chain" id="PRO_1000086018" description="Small ribosomal subunit protein uS5">
    <location>
        <begin position="1"/>
        <end position="200"/>
    </location>
</feature>
<feature type="domain" description="S5 DRBM" evidence="1">
    <location>
        <begin position="28"/>
        <end position="91"/>
    </location>
</feature>
<feature type="region of interest" description="Disordered" evidence="2">
    <location>
        <begin position="1"/>
        <end position="26"/>
    </location>
</feature>
<feature type="compositionally biased region" description="Basic and acidic residues" evidence="2">
    <location>
        <begin position="1"/>
        <end position="22"/>
    </location>
</feature>
<evidence type="ECO:0000255" key="1">
    <source>
        <dbReference type="HAMAP-Rule" id="MF_01307"/>
    </source>
</evidence>
<evidence type="ECO:0000256" key="2">
    <source>
        <dbReference type="SAM" id="MobiDB-lite"/>
    </source>
</evidence>
<evidence type="ECO:0000305" key="3"/>
<accession>Q0BYD1</accession>
<dbReference type="EMBL" id="CP000158">
    <property type="protein sequence ID" value="ABI77465.1"/>
    <property type="molecule type" value="Genomic_DNA"/>
</dbReference>
<dbReference type="RefSeq" id="WP_011647809.1">
    <property type="nucleotide sequence ID" value="NC_008358.1"/>
</dbReference>
<dbReference type="SMR" id="Q0BYD1"/>
<dbReference type="STRING" id="228405.HNE_2834"/>
<dbReference type="KEGG" id="hne:HNE_2834"/>
<dbReference type="eggNOG" id="COG0098">
    <property type="taxonomic scope" value="Bacteria"/>
</dbReference>
<dbReference type="HOGENOM" id="CLU_065898_2_2_5"/>
<dbReference type="Proteomes" id="UP000001959">
    <property type="component" value="Chromosome"/>
</dbReference>
<dbReference type="GO" id="GO:0015935">
    <property type="term" value="C:small ribosomal subunit"/>
    <property type="evidence" value="ECO:0007669"/>
    <property type="project" value="InterPro"/>
</dbReference>
<dbReference type="GO" id="GO:0019843">
    <property type="term" value="F:rRNA binding"/>
    <property type="evidence" value="ECO:0007669"/>
    <property type="project" value="UniProtKB-UniRule"/>
</dbReference>
<dbReference type="GO" id="GO:0003735">
    <property type="term" value="F:structural constituent of ribosome"/>
    <property type="evidence" value="ECO:0007669"/>
    <property type="project" value="InterPro"/>
</dbReference>
<dbReference type="GO" id="GO:0006412">
    <property type="term" value="P:translation"/>
    <property type="evidence" value="ECO:0007669"/>
    <property type="project" value="UniProtKB-UniRule"/>
</dbReference>
<dbReference type="FunFam" id="3.30.160.20:FF:000001">
    <property type="entry name" value="30S ribosomal protein S5"/>
    <property type="match status" value="1"/>
</dbReference>
<dbReference type="FunFam" id="3.30.230.10:FF:000002">
    <property type="entry name" value="30S ribosomal protein S5"/>
    <property type="match status" value="1"/>
</dbReference>
<dbReference type="Gene3D" id="3.30.160.20">
    <property type="match status" value="1"/>
</dbReference>
<dbReference type="Gene3D" id="3.30.230.10">
    <property type="match status" value="1"/>
</dbReference>
<dbReference type="HAMAP" id="MF_01307_B">
    <property type="entry name" value="Ribosomal_uS5_B"/>
    <property type="match status" value="1"/>
</dbReference>
<dbReference type="InterPro" id="IPR020568">
    <property type="entry name" value="Ribosomal_Su5_D2-typ_SF"/>
</dbReference>
<dbReference type="InterPro" id="IPR000851">
    <property type="entry name" value="Ribosomal_uS5"/>
</dbReference>
<dbReference type="InterPro" id="IPR005712">
    <property type="entry name" value="Ribosomal_uS5_bac-type"/>
</dbReference>
<dbReference type="InterPro" id="IPR005324">
    <property type="entry name" value="Ribosomal_uS5_C"/>
</dbReference>
<dbReference type="InterPro" id="IPR013810">
    <property type="entry name" value="Ribosomal_uS5_N"/>
</dbReference>
<dbReference type="InterPro" id="IPR018192">
    <property type="entry name" value="Ribosomal_uS5_N_CS"/>
</dbReference>
<dbReference type="InterPro" id="IPR014721">
    <property type="entry name" value="Ribsml_uS5_D2-typ_fold_subgr"/>
</dbReference>
<dbReference type="NCBIfam" id="TIGR01021">
    <property type="entry name" value="rpsE_bact"/>
    <property type="match status" value="1"/>
</dbReference>
<dbReference type="PANTHER" id="PTHR48277">
    <property type="entry name" value="MITOCHONDRIAL RIBOSOMAL PROTEIN S5"/>
    <property type="match status" value="1"/>
</dbReference>
<dbReference type="PANTHER" id="PTHR48277:SF1">
    <property type="entry name" value="MITOCHONDRIAL RIBOSOMAL PROTEIN S5"/>
    <property type="match status" value="1"/>
</dbReference>
<dbReference type="Pfam" id="PF00333">
    <property type="entry name" value="Ribosomal_S5"/>
    <property type="match status" value="1"/>
</dbReference>
<dbReference type="Pfam" id="PF03719">
    <property type="entry name" value="Ribosomal_S5_C"/>
    <property type="match status" value="1"/>
</dbReference>
<dbReference type="SUPFAM" id="SSF54768">
    <property type="entry name" value="dsRNA-binding domain-like"/>
    <property type="match status" value="1"/>
</dbReference>
<dbReference type="SUPFAM" id="SSF54211">
    <property type="entry name" value="Ribosomal protein S5 domain 2-like"/>
    <property type="match status" value="1"/>
</dbReference>
<dbReference type="PROSITE" id="PS00585">
    <property type="entry name" value="RIBOSOMAL_S5"/>
    <property type="match status" value="1"/>
</dbReference>
<dbReference type="PROSITE" id="PS50881">
    <property type="entry name" value="S5_DSRBD"/>
    <property type="match status" value="1"/>
</dbReference>
<organism>
    <name type="scientific">Hyphomonas neptunium (strain ATCC 15444)</name>
    <dbReference type="NCBI Taxonomy" id="228405"/>
    <lineage>
        <taxon>Bacteria</taxon>
        <taxon>Pseudomonadati</taxon>
        <taxon>Pseudomonadota</taxon>
        <taxon>Alphaproteobacteria</taxon>
        <taxon>Hyphomonadales</taxon>
        <taxon>Hyphomonadaceae</taxon>
        <taxon>Hyphomonas</taxon>
    </lineage>
</organism>
<sequence length="200" mass="21370">MAEERGEKRGRRRDRENPRDRDDESSELVDKLVGINRVAKTVKGGKNFGFAALVVVGDQKGRAGFGKGKAREVPEAIRKATEEAKRNLVRIPLREGRTLHHDGNGRHGAGKVVLRAAPPGTGVIAGGPMRAVMEVLGVQDVVGKSLGSSNPYNMVRATFDALKGQANPRTVASKRGLKVQDIVGRRTDGASEAGMADSVN</sequence>
<proteinExistence type="inferred from homology"/>
<name>RS5_HYPNA</name>
<gene>
    <name evidence="1" type="primary">rpsE</name>
    <name type="ordered locus">HNE_2834</name>
</gene>
<comment type="function">
    <text evidence="1">With S4 and S12 plays an important role in translational accuracy.</text>
</comment>
<comment type="function">
    <text evidence="1">Located at the back of the 30S subunit body where it stabilizes the conformation of the head with respect to the body.</text>
</comment>
<comment type="subunit">
    <text evidence="1">Part of the 30S ribosomal subunit. Contacts proteins S4 and S8.</text>
</comment>
<comment type="domain">
    <text>The N-terminal domain interacts with the head of the 30S subunit; the C-terminal domain interacts with the body and contacts protein S4. The interaction surface between S4 and S5 is involved in control of translational fidelity.</text>
</comment>
<comment type="similarity">
    <text evidence="1">Belongs to the universal ribosomal protein uS5 family.</text>
</comment>
<protein>
    <recommendedName>
        <fullName evidence="1">Small ribosomal subunit protein uS5</fullName>
    </recommendedName>
    <alternativeName>
        <fullName evidence="3">30S ribosomal protein S5</fullName>
    </alternativeName>
</protein>
<keyword id="KW-1185">Reference proteome</keyword>
<keyword id="KW-0687">Ribonucleoprotein</keyword>
<keyword id="KW-0689">Ribosomal protein</keyword>
<keyword id="KW-0694">RNA-binding</keyword>
<keyword id="KW-0699">rRNA-binding</keyword>
<reference key="1">
    <citation type="journal article" date="2006" name="J. Bacteriol.">
        <title>Comparative genomic evidence for a close relationship between the dimorphic prosthecate bacteria Hyphomonas neptunium and Caulobacter crescentus.</title>
        <authorList>
            <person name="Badger J.H."/>
            <person name="Hoover T.R."/>
            <person name="Brun Y.V."/>
            <person name="Weiner R.M."/>
            <person name="Laub M.T."/>
            <person name="Alexandre G."/>
            <person name="Mrazek J."/>
            <person name="Ren Q."/>
            <person name="Paulsen I.T."/>
            <person name="Nelson K.E."/>
            <person name="Khouri H.M."/>
            <person name="Radune D."/>
            <person name="Sosa J."/>
            <person name="Dodson R.J."/>
            <person name="Sullivan S.A."/>
            <person name="Rosovitz M.J."/>
            <person name="Madupu R."/>
            <person name="Brinkac L.M."/>
            <person name="Durkin A.S."/>
            <person name="Daugherty S.C."/>
            <person name="Kothari S.P."/>
            <person name="Giglio M.G."/>
            <person name="Zhou L."/>
            <person name="Haft D.H."/>
            <person name="Selengut J.D."/>
            <person name="Davidsen T.M."/>
            <person name="Yang Q."/>
            <person name="Zafar N."/>
            <person name="Ward N.L."/>
        </authorList>
    </citation>
    <scope>NUCLEOTIDE SEQUENCE [LARGE SCALE GENOMIC DNA]</scope>
    <source>
        <strain>ATCC 15444</strain>
    </source>
</reference>